<gene>
    <name evidence="1" type="primary">hmgA</name>
    <name type="ordered locus">Bpet4016</name>
</gene>
<dbReference type="EC" id="1.13.11.5" evidence="1"/>
<dbReference type="EMBL" id="AM902716">
    <property type="protein sequence ID" value="CAP44364.1"/>
    <property type="molecule type" value="Genomic_DNA"/>
</dbReference>
<dbReference type="SMR" id="A9I714"/>
<dbReference type="STRING" id="94624.Bpet4016"/>
<dbReference type="KEGG" id="bpt:Bpet4016"/>
<dbReference type="eggNOG" id="COG3508">
    <property type="taxonomic scope" value="Bacteria"/>
</dbReference>
<dbReference type="UniPathway" id="UPA00139">
    <property type="reaction ID" value="UER00339"/>
</dbReference>
<dbReference type="Proteomes" id="UP000001225">
    <property type="component" value="Chromosome"/>
</dbReference>
<dbReference type="GO" id="GO:0005737">
    <property type="term" value="C:cytoplasm"/>
    <property type="evidence" value="ECO:0007669"/>
    <property type="project" value="TreeGrafter"/>
</dbReference>
<dbReference type="GO" id="GO:0004411">
    <property type="term" value="F:homogentisate 1,2-dioxygenase activity"/>
    <property type="evidence" value="ECO:0007669"/>
    <property type="project" value="UniProtKB-UniRule"/>
</dbReference>
<dbReference type="GO" id="GO:0005506">
    <property type="term" value="F:iron ion binding"/>
    <property type="evidence" value="ECO:0007669"/>
    <property type="project" value="UniProtKB-UniRule"/>
</dbReference>
<dbReference type="GO" id="GO:0006559">
    <property type="term" value="P:L-phenylalanine catabolic process"/>
    <property type="evidence" value="ECO:0007669"/>
    <property type="project" value="UniProtKB-UniRule"/>
</dbReference>
<dbReference type="GO" id="GO:0006572">
    <property type="term" value="P:tyrosine catabolic process"/>
    <property type="evidence" value="ECO:0007669"/>
    <property type="project" value="UniProtKB-UniRule"/>
</dbReference>
<dbReference type="CDD" id="cd07000">
    <property type="entry name" value="cupin_HGO_N"/>
    <property type="match status" value="1"/>
</dbReference>
<dbReference type="FunFam" id="2.60.120.10:FF:000034">
    <property type="entry name" value="Homogentisate 1,2-dioxygenase"/>
    <property type="match status" value="1"/>
</dbReference>
<dbReference type="Gene3D" id="2.60.120.10">
    <property type="entry name" value="Jelly Rolls"/>
    <property type="match status" value="1"/>
</dbReference>
<dbReference type="HAMAP" id="MF_00334">
    <property type="entry name" value="Homogentis_dioxygen"/>
    <property type="match status" value="1"/>
</dbReference>
<dbReference type="InterPro" id="IPR046451">
    <property type="entry name" value="HgmA_C"/>
</dbReference>
<dbReference type="InterPro" id="IPR046452">
    <property type="entry name" value="HgmA_N"/>
</dbReference>
<dbReference type="InterPro" id="IPR005708">
    <property type="entry name" value="Homogentis_dOase"/>
</dbReference>
<dbReference type="InterPro" id="IPR022950">
    <property type="entry name" value="Homogentis_dOase_bac"/>
</dbReference>
<dbReference type="InterPro" id="IPR014710">
    <property type="entry name" value="RmlC-like_jellyroll"/>
</dbReference>
<dbReference type="InterPro" id="IPR011051">
    <property type="entry name" value="RmlC_Cupin_sf"/>
</dbReference>
<dbReference type="NCBIfam" id="TIGR01015">
    <property type="entry name" value="hmgA"/>
    <property type="match status" value="1"/>
</dbReference>
<dbReference type="PANTHER" id="PTHR11056">
    <property type="entry name" value="HOMOGENTISATE 1,2-DIOXYGENASE"/>
    <property type="match status" value="1"/>
</dbReference>
<dbReference type="PANTHER" id="PTHR11056:SF0">
    <property type="entry name" value="HOMOGENTISATE 1,2-DIOXYGENASE"/>
    <property type="match status" value="1"/>
</dbReference>
<dbReference type="Pfam" id="PF04209">
    <property type="entry name" value="HgmA_C"/>
    <property type="match status" value="1"/>
</dbReference>
<dbReference type="Pfam" id="PF20510">
    <property type="entry name" value="HgmA_N"/>
    <property type="match status" value="1"/>
</dbReference>
<dbReference type="SUPFAM" id="SSF51182">
    <property type="entry name" value="RmlC-like cupins"/>
    <property type="match status" value="1"/>
</dbReference>
<name>HGD_BORPD</name>
<evidence type="ECO:0000255" key="1">
    <source>
        <dbReference type="HAMAP-Rule" id="MF_00334"/>
    </source>
</evidence>
<reference key="1">
    <citation type="journal article" date="2008" name="BMC Genomics">
        <title>The missing link: Bordetella petrii is endowed with both the metabolic versatility of environmental bacteria and virulence traits of pathogenic Bordetellae.</title>
        <authorList>
            <person name="Gross R."/>
            <person name="Guzman C.A."/>
            <person name="Sebaihia M."/>
            <person name="Martin dos Santos V.A.P."/>
            <person name="Pieper D.H."/>
            <person name="Koebnik R."/>
            <person name="Lechner M."/>
            <person name="Bartels D."/>
            <person name="Buhrmester J."/>
            <person name="Choudhuri J.V."/>
            <person name="Ebensen T."/>
            <person name="Gaigalat L."/>
            <person name="Herrmann S."/>
            <person name="Khachane A.N."/>
            <person name="Larisch C."/>
            <person name="Link S."/>
            <person name="Linke B."/>
            <person name="Meyer F."/>
            <person name="Mormann S."/>
            <person name="Nakunst D."/>
            <person name="Rueckert C."/>
            <person name="Schneiker-Bekel S."/>
            <person name="Schulze K."/>
            <person name="Voerholter F.-J."/>
            <person name="Yevsa T."/>
            <person name="Engle J.T."/>
            <person name="Goldman W.E."/>
            <person name="Puehler A."/>
            <person name="Goebel U.B."/>
            <person name="Goesmann A."/>
            <person name="Bloecker H."/>
            <person name="Kaiser O."/>
            <person name="Martinez-Arias R."/>
        </authorList>
    </citation>
    <scope>NUCLEOTIDE SEQUENCE [LARGE SCALE GENOMIC DNA]</scope>
    <source>
        <strain>ATCC BAA-461 / DSM 12804 / CCUG 43448</strain>
    </source>
</reference>
<feature type="chain" id="PRO_1000119839" description="Homogentisate 1,2-dioxygenase">
    <location>
        <begin position="1"/>
        <end position="432"/>
    </location>
</feature>
<feature type="active site" description="Proton acceptor" evidence="1">
    <location>
        <position position="286"/>
    </location>
</feature>
<feature type="binding site" evidence="1">
    <location>
        <position position="329"/>
    </location>
    <ligand>
        <name>Fe cation</name>
        <dbReference type="ChEBI" id="CHEBI:24875"/>
    </ligand>
</feature>
<feature type="binding site" evidence="1">
    <location>
        <position position="335"/>
    </location>
    <ligand>
        <name>Fe cation</name>
        <dbReference type="ChEBI" id="CHEBI:24875"/>
    </ligand>
</feature>
<feature type="binding site" evidence="1">
    <location>
        <position position="344"/>
    </location>
    <ligand>
        <name>homogentisate</name>
        <dbReference type="ChEBI" id="CHEBI:16169"/>
    </ligand>
</feature>
<feature type="binding site" evidence="1">
    <location>
        <position position="365"/>
    </location>
    <ligand>
        <name>Fe cation</name>
        <dbReference type="ChEBI" id="CHEBI:24875"/>
    </ligand>
</feature>
<feature type="binding site" evidence="1">
    <location>
        <position position="365"/>
    </location>
    <ligand>
        <name>homogentisate</name>
        <dbReference type="ChEBI" id="CHEBI:16169"/>
    </ligand>
</feature>
<organism>
    <name type="scientific">Bordetella petrii (strain ATCC BAA-461 / DSM 12804 / CCUG 43448)</name>
    <dbReference type="NCBI Taxonomy" id="340100"/>
    <lineage>
        <taxon>Bacteria</taxon>
        <taxon>Pseudomonadati</taxon>
        <taxon>Pseudomonadota</taxon>
        <taxon>Betaproteobacteria</taxon>
        <taxon>Burkholderiales</taxon>
        <taxon>Alcaligenaceae</taxon>
        <taxon>Bordetella</taxon>
    </lineage>
</organism>
<proteinExistence type="inferred from homology"/>
<keyword id="KW-0223">Dioxygenase</keyword>
<keyword id="KW-0408">Iron</keyword>
<keyword id="KW-0479">Metal-binding</keyword>
<keyword id="KW-0560">Oxidoreductase</keyword>
<keyword id="KW-0585">Phenylalanine catabolism</keyword>
<keyword id="KW-0828">Tyrosine catabolism</keyword>
<comment type="function">
    <text evidence="1">Involved in the catabolism of homogentisate (2,5-dihydroxyphenylacetate or 2,5-OH-PhAc), a central intermediate in the degradation of phenylalanine and tyrosine. Catalyzes the oxidative ring cleavage of the aromatic ring of homogentisate to yield maleylacetoacetate.</text>
</comment>
<comment type="catalytic activity">
    <reaction evidence="1">
        <text>homogentisate + O2 = 4-maleylacetoacetate + H(+)</text>
        <dbReference type="Rhea" id="RHEA:15449"/>
        <dbReference type="ChEBI" id="CHEBI:15378"/>
        <dbReference type="ChEBI" id="CHEBI:15379"/>
        <dbReference type="ChEBI" id="CHEBI:16169"/>
        <dbReference type="ChEBI" id="CHEBI:17105"/>
        <dbReference type="EC" id="1.13.11.5"/>
    </reaction>
</comment>
<comment type="cofactor">
    <cofactor evidence="1">
        <name>Fe cation</name>
        <dbReference type="ChEBI" id="CHEBI:24875"/>
    </cofactor>
</comment>
<comment type="pathway">
    <text evidence="1">Amino-acid degradation; L-phenylalanine degradation; acetoacetate and fumarate from L-phenylalanine: step 4/6.</text>
</comment>
<comment type="subunit">
    <text evidence="1">Hexamer; dimer of trimers.</text>
</comment>
<comment type="similarity">
    <text evidence="1">Belongs to the homogentisate dioxygenase family.</text>
</comment>
<protein>
    <recommendedName>
        <fullName evidence="1">Homogentisate 1,2-dioxygenase</fullName>
        <shortName evidence="1">HGDO</shortName>
        <ecNumber evidence="1">1.13.11.5</ecNumber>
    </recommendedName>
    <alternativeName>
        <fullName evidence="1">Homogentisate oxygenase</fullName>
    </alternativeName>
    <alternativeName>
        <fullName evidence="1">Homogentisic acid oxidase</fullName>
    </alternativeName>
    <alternativeName>
        <fullName evidence="1">Homogentisicase</fullName>
    </alternativeName>
</protein>
<accession>A9I714</accession>
<sequence length="432" mass="47513">MPLQYQSGFGNDWATEALPGALPAGRNSPQRCPYGLYAEQLSGTAFTAPRAENRRSWLYRIRPAAQHRPFEPFDGAARWLSDFGAAPVTPNQLRWSPLPLPDAPTDFIEGVQTWGGNGGPGEHGGVGIHLYAANRSMQGRYFYNADGELLIVPQQGRLRLATELGIIEVEPLEIAVIPRGVRLRVDLPDGQARGYMLENFGAALHLPELGPIGSNCLANARDFQTPVACYEDIEGDFELIAKFTGGFWRAAIGHSPLDVVAWHGTHAPYKYDLRHFNTIGSISFDHPDPSIFTVLTSPSDTPGTANMDFAIFPPRVLAMENTFRPPWFHRNVASEFMGLIHGVYDAKAEGFAPGGASLHNCMSGHGPDADTFEKATAADTSQAHYIRDTMAFMFETRRVIRPTAQALASAQLQSDYYECWQGLNKHFDPAQP</sequence>